<protein>
    <recommendedName>
        <fullName evidence="1">Holo-[acyl-carrier-protein] synthase</fullName>
        <shortName evidence="1">Holo-ACP synthase</shortName>
        <ecNumber evidence="1">2.7.8.7</ecNumber>
    </recommendedName>
    <alternativeName>
        <fullName evidence="1">4'-phosphopantetheinyl transferase AcpS</fullName>
    </alternativeName>
</protein>
<sequence>MIVGHGIDIEELASIESAVTRHEGFAKRVLTAQEMERFTSLKGRRQIEYLAGRWSAKEAFSKAMGTGISKLGFQDLEVLNNERGAPYFSQAPFSGKIWLSISHTDQFVTASVILEENHES</sequence>
<name>ACPS_STRPI</name>
<evidence type="ECO:0000255" key="1">
    <source>
        <dbReference type="HAMAP-Rule" id="MF_00101"/>
    </source>
</evidence>
<feature type="chain" id="PRO_1000093922" description="Holo-[acyl-carrier-protein] synthase">
    <location>
        <begin position="1"/>
        <end position="120"/>
    </location>
</feature>
<feature type="binding site" evidence="1">
    <location>
        <position position="8"/>
    </location>
    <ligand>
        <name>Mg(2+)</name>
        <dbReference type="ChEBI" id="CHEBI:18420"/>
    </ligand>
</feature>
<feature type="binding site" evidence="1">
    <location>
        <position position="58"/>
    </location>
    <ligand>
        <name>Mg(2+)</name>
        <dbReference type="ChEBI" id="CHEBI:18420"/>
    </ligand>
</feature>
<proteinExistence type="inferred from homology"/>
<accession>B1I756</accession>
<comment type="function">
    <text evidence="1">Transfers the 4'-phosphopantetheine moiety from coenzyme A to a Ser of acyl-carrier-protein.</text>
</comment>
<comment type="catalytic activity">
    <reaction evidence="1">
        <text>apo-[ACP] + CoA = holo-[ACP] + adenosine 3',5'-bisphosphate + H(+)</text>
        <dbReference type="Rhea" id="RHEA:12068"/>
        <dbReference type="Rhea" id="RHEA-COMP:9685"/>
        <dbReference type="Rhea" id="RHEA-COMP:9690"/>
        <dbReference type="ChEBI" id="CHEBI:15378"/>
        <dbReference type="ChEBI" id="CHEBI:29999"/>
        <dbReference type="ChEBI" id="CHEBI:57287"/>
        <dbReference type="ChEBI" id="CHEBI:58343"/>
        <dbReference type="ChEBI" id="CHEBI:64479"/>
        <dbReference type="EC" id="2.7.8.7"/>
    </reaction>
</comment>
<comment type="cofactor">
    <cofactor evidence="1">
        <name>Mg(2+)</name>
        <dbReference type="ChEBI" id="CHEBI:18420"/>
    </cofactor>
</comment>
<comment type="subcellular location">
    <subcellularLocation>
        <location evidence="1">Cytoplasm</location>
    </subcellularLocation>
</comment>
<comment type="similarity">
    <text evidence="1">Belongs to the P-Pant transferase superfamily. AcpS family.</text>
</comment>
<gene>
    <name evidence="1" type="primary">acpS</name>
    <name type="ordered locus">SPH_1803</name>
</gene>
<organism>
    <name type="scientific">Streptococcus pneumoniae (strain Hungary19A-6)</name>
    <dbReference type="NCBI Taxonomy" id="487214"/>
    <lineage>
        <taxon>Bacteria</taxon>
        <taxon>Bacillati</taxon>
        <taxon>Bacillota</taxon>
        <taxon>Bacilli</taxon>
        <taxon>Lactobacillales</taxon>
        <taxon>Streptococcaceae</taxon>
        <taxon>Streptococcus</taxon>
    </lineage>
</organism>
<reference key="1">
    <citation type="journal article" date="2010" name="Genome Biol.">
        <title>Structure and dynamics of the pan-genome of Streptococcus pneumoniae and closely related species.</title>
        <authorList>
            <person name="Donati C."/>
            <person name="Hiller N.L."/>
            <person name="Tettelin H."/>
            <person name="Muzzi A."/>
            <person name="Croucher N.J."/>
            <person name="Angiuoli S.V."/>
            <person name="Oggioni M."/>
            <person name="Dunning Hotopp J.C."/>
            <person name="Hu F.Z."/>
            <person name="Riley D.R."/>
            <person name="Covacci A."/>
            <person name="Mitchell T.J."/>
            <person name="Bentley S.D."/>
            <person name="Kilian M."/>
            <person name="Ehrlich G.D."/>
            <person name="Rappuoli R."/>
            <person name="Moxon E.R."/>
            <person name="Masignani V."/>
        </authorList>
    </citation>
    <scope>NUCLEOTIDE SEQUENCE [LARGE SCALE GENOMIC DNA]</scope>
    <source>
        <strain>Hungary19A-6</strain>
    </source>
</reference>
<keyword id="KW-0963">Cytoplasm</keyword>
<keyword id="KW-0275">Fatty acid biosynthesis</keyword>
<keyword id="KW-0276">Fatty acid metabolism</keyword>
<keyword id="KW-0444">Lipid biosynthesis</keyword>
<keyword id="KW-0443">Lipid metabolism</keyword>
<keyword id="KW-0460">Magnesium</keyword>
<keyword id="KW-0479">Metal-binding</keyword>
<keyword id="KW-0808">Transferase</keyword>
<dbReference type="EC" id="2.7.8.7" evidence="1"/>
<dbReference type="EMBL" id="CP000936">
    <property type="protein sequence ID" value="ACA36570.1"/>
    <property type="molecule type" value="Genomic_DNA"/>
</dbReference>
<dbReference type="RefSeq" id="WP_000635008.1">
    <property type="nucleotide sequence ID" value="NC_010380.1"/>
</dbReference>
<dbReference type="SMR" id="B1I756"/>
<dbReference type="KEGG" id="spv:SPH_1803"/>
<dbReference type="HOGENOM" id="CLU_089696_1_2_9"/>
<dbReference type="Proteomes" id="UP000002163">
    <property type="component" value="Chromosome"/>
</dbReference>
<dbReference type="GO" id="GO:0005829">
    <property type="term" value="C:cytosol"/>
    <property type="evidence" value="ECO:0007669"/>
    <property type="project" value="TreeGrafter"/>
</dbReference>
<dbReference type="GO" id="GO:0008897">
    <property type="term" value="F:holo-[acyl-carrier-protein] synthase activity"/>
    <property type="evidence" value="ECO:0007669"/>
    <property type="project" value="UniProtKB-UniRule"/>
</dbReference>
<dbReference type="GO" id="GO:0000287">
    <property type="term" value="F:magnesium ion binding"/>
    <property type="evidence" value="ECO:0007669"/>
    <property type="project" value="UniProtKB-UniRule"/>
</dbReference>
<dbReference type="GO" id="GO:0006633">
    <property type="term" value="P:fatty acid biosynthetic process"/>
    <property type="evidence" value="ECO:0007669"/>
    <property type="project" value="UniProtKB-UniRule"/>
</dbReference>
<dbReference type="GO" id="GO:0019878">
    <property type="term" value="P:lysine biosynthetic process via aminoadipic acid"/>
    <property type="evidence" value="ECO:0007669"/>
    <property type="project" value="TreeGrafter"/>
</dbReference>
<dbReference type="Gene3D" id="3.90.470.20">
    <property type="entry name" value="4'-phosphopantetheinyl transferase domain"/>
    <property type="match status" value="1"/>
</dbReference>
<dbReference type="HAMAP" id="MF_00101">
    <property type="entry name" value="AcpS"/>
    <property type="match status" value="1"/>
</dbReference>
<dbReference type="InterPro" id="IPR008278">
    <property type="entry name" value="4-PPantetheinyl_Trfase_dom"/>
</dbReference>
<dbReference type="InterPro" id="IPR037143">
    <property type="entry name" value="4-PPantetheinyl_Trfase_dom_sf"/>
</dbReference>
<dbReference type="InterPro" id="IPR002582">
    <property type="entry name" value="ACPS"/>
</dbReference>
<dbReference type="InterPro" id="IPR050559">
    <property type="entry name" value="P-Pant_transferase_sf"/>
</dbReference>
<dbReference type="InterPro" id="IPR004568">
    <property type="entry name" value="Ppantetheine-prot_Trfase_dom"/>
</dbReference>
<dbReference type="NCBIfam" id="TIGR00516">
    <property type="entry name" value="acpS"/>
    <property type="match status" value="1"/>
</dbReference>
<dbReference type="NCBIfam" id="TIGR00556">
    <property type="entry name" value="pantethn_trn"/>
    <property type="match status" value="1"/>
</dbReference>
<dbReference type="PANTHER" id="PTHR12215:SF10">
    <property type="entry name" value="L-AMINOADIPATE-SEMIALDEHYDE DEHYDROGENASE-PHOSPHOPANTETHEINYL TRANSFERASE"/>
    <property type="match status" value="1"/>
</dbReference>
<dbReference type="PANTHER" id="PTHR12215">
    <property type="entry name" value="PHOSPHOPANTETHEINE TRANSFERASE"/>
    <property type="match status" value="1"/>
</dbReference>
<dbReference type="Pfam" id="PF01648">
    <property type="entry name" value="ACPS"/>
    <property type="match status" value="1"/>
</dbReference>
<dbReference type="SUPFAM" id="SSF56214">
    <property type="entry name" value="4'-phosphopantetheinyl transferase"/>
    <property type="match status" value="1"/>
</dbReference>